<organism>
    <name type="scientific">Bacillus phage B103</name>
    <name type="common">Bacteriophage B103</name>
    <dbReference type="NCBI Taxonomy" id="2994042"/>
    <lineage>
        <taxon>Viruses</taxon>
        <taxon>Duplodnaviria</taxon>
        <taxon>Heunggongvirae</taxon>
        <taxon>Uroviricota</taxon>
        <taxon>Caudoviricetes</taxon>
        <taxon>Salasmaviridae</taxon>
        <taxon>Picovirinae</taxon>
        <taxon>Beecentumtrevirus</taxon>
        <taxon>Beecentumtrevirus B103</taxon>
    </lineage>
</organism>
<comment type="function">
    <text evidence="1">This protein is believed to be a positive regulator of late transcription. It may function as a sigma-like component of the host RNA polymerase. Binds to a region of the A3 promoter located between nucleotides -50 and -100 relative to the transcription start site, that presents a sequence-directed curvature. Full induction of this curvature is needed for the transcription activation process (By similarity).</text>
</comment>
<comment type="similarity">
    <text evidence="3">Belongs to the podoviruses GP4 family.</text>
</comment>
<keyword id="KW-0010">Activator</keyword>
<keyword id="KW-0240">DNA-directed RNA polymerase</keyword>
<keyword id="KW-0244">Early protein</keyword>
<keyword id="KW-0548">Nucleotidyltransferase</keyword>
<keyword id="KW-0731">Sigma factor</keyword>
<keyword id="KW-0804">Transcription</keyword>
<keyword id="KW-0805">Transcription regulation</keyword>
<keyword id="KW-0808">Transferase</keyword>
<accession>Q37884</accession>
<reference key="1">
    <citation type="journal article" date="1997" name="Gene">
        <title>Bacteriophage B103: complete DNA sequence of its genome and relationship to other Bacillus phages.</title>
        <authorList>
            <person name="Pecenkova T."/>
            <person name="Benes V."/>
            <person name="Paces J."/>
            <person name="Vlcek C."/>
            <person name="Paces V."/>
        </authorList>
    </citation>
    <scope>NUCLEOTIDE SEQUENCE [LARGE SCALE GENOMIC DNA]</scope>
</reference>
<evidence type="ECO:0000250" key="1"/>
<evidence type="ECO:0000255" key="2"/>
<evidence type="ECO:0000305" key="3"/>
<gene>
    <name type="primary">4</name>
</gene>
<dbReference type="EMBL" id="X99260">
    <property type="protein sequence ID" value="CAA67651.1"/>
    <property type="molecule type" value="Genomic_DNA"/>
</dbReference>
<dbReference type="RefSeq" id="NP_690637.1">
    <property type="nucleotide sequence ID" value="NC_004165.1"/>
</dbReference>
<dbReference type="SMR" id="Q37884"/>
<dbReference type="KEGG" id="vg:955360"/>
<dbReference type="Proteomes" id="UP000000971">
    <property type="component" value="Segment"/>
</dbReference>
<dbReference type="GO" id="GO:0000428">
    <property type="term" value="C:DNA-directed RNA polymerase complex"/>
    <property type="evidence" value="ECO:0007669"/>
    <property type="project" value="UniProtKB-KW"/>
</dbReference>
<dbReference type="GO" id="GO:0003899">
    <property type="term" value="F:DNA-directed RNA polymerase activity"/>
    <property type="evidence" value="ECO:0007669"/>
    <property type="project" value="InterPro"/>
</dbReference>
<dbReference type="GO" id="GO:0016987">
    <property type="term" value="F:sigma factor activity"/>
    <property type="evidence" value="ECO:0007669"/>
    <property type="project" value="UniProtKB-KW"/>
</dbReference>
<dbReference type="Gene3D" id="3.30.70.3560">
    <property type="entry name" value="Phi-29-like late genes activator, P4"/>
    <property type="match status" value="1"/>
</dbReference>
<dbReference type="InterPro" id="IPR038246">
    <property type="entry name" value="Phi-29-like_sf"/>
</dbReference>
<dbReference type="InterPro" id="IPR008771">
    <property type="entry name" value="Phi-29_GP4"/>
</dbReference>
<dbReference type="Pfam" id="PF05464">
    <property type="entry name" value="Phi-29_GP4"/>
    <property type="match status" value="1"/>
</dbReference>
<name>VG4_BPB03</name>
<proteinExistence type="inferred from homology"/>
<feature type="chain" id="PRO_0000106558" description="Late genes activator">
    <location>
        <begin position="1"/>
        <end position="125"/>
    </location>
</feature>
<feature type="DNA-binding region" description="H-T-H motif" evidence="2">
    <location>
        <begin position="77"/>
        <end position="96"/>
    </location>
</feature>
<sequence length="125" mass="14915">MPRTARGIYHNLKESEYVVSNGDATFFFSSELYLNKFLDGYQKHREEFNKKINRITDTPLNMDMLADITFYSNVEKRGFHTWLKGCNASWQEIHVYALRTMTKPCTQNWSRIRKPKLAERRKNMV</sequence>
<organismHost>
    <name type="scientific">Bacillus subtilis</name>
    <dbReference type="NCBI Taxonomy" id="1423"/>
</organismHost>
<protein>
    <recommendedName>
        <fullName>Late genes activator</fullName>
    </recommendedName>
    <alternativeName>
        <fullName>Early protein GP4</fullName>
    </alternativeName>
</protein>